<organism>
    <name type="scientific">Caenorhabditis elegans</name>
    <dbReference type="NCBI Taxonomy" id="6239"/>
    <lineage>
        <taxon>Eukaryota</taxon>
        <taxon>Metazoa</taxon>
        <taxon>Ecdysozoa</taxon>
        <taxon>Nematoda</taxon>
        <taxon>Chromadorea</taxon>
        <taxon>Rhabditida</taxon>
        <taxon>Rhabditina</taxon>
        <taxon>Rhabditomorpha</taxon>
        <taxon>Rhabditoidea</taxon>
        <taxon>Rhabditidae</taxon>
        <taxon>Peloderinae</taxon>
        <taxon>Caenorhabditis</taxon>
    </lineage>
</organism>
<comment type="function">
    <text evidence="3 4">Acts as a component of the GARP complex that is involved in retrograde transport from early and late endosomes to the trans-Golgi network (TGN) (PubMed:21613545). The GARP complex facilitates tethering as well as SNARE complex assembly at the Golgi (PubMed:21613545). Plays a role in the trafficking of cargo to dense-core vesicles, probably through association with the EARP-interacting protein eipr-1 (PubMed:27191843). Important for neuronal function (PubMed:27191843).</text>
</comment>
<comment type="subunit">
    <text evidence="3">Component of the Golgi-associated retrograde protein (GARP) complex, also called VFT (VPS fifty-three) complex, composed of vps-51, vps-52, vps-53 and vps-54. Within the complex interacts with vps-53 and vps-54 (PubMed:21613545). Interacts with the small GTPases rab-6.1 and rab-6.2 (PubMed:21613545).</text>
</comment>
<comment type="interaction">
    <interactant intactId="EBI-318981">
        <id>G5EFV8</id>
    </interactant>
    <interactant intactId="EBI-313277">
        <id>O01839</id>
        <label>vps-51</label>
    </interactant>
    <organismsDiffer>false</organismsDiffer>
    <experiments>6</experiments>
</comment>
<comment type="interaction">
    <interactant intactId="EBI-318981">
        <id>G5EFV8</id>
    </interactant>
    <interactant intactId="EBI-6394890">
        <id>P34561</id>
        <label>vps-53</label>
    </interactant>
    <organismsDiffer>false</organismsDiffer>
    <experiments>3</experiments>
</comment>
<comment type="interaction">
    <interactant intactId="EBI-318981">
        <id>G5EFV8</id>
    </interactant>
    <interactant intactId="EBI-6395200">
        <id>Q22639</id>
        <label>vps-54</label>
    </interactant>
    <organismsDiffer>false</organismsDiffer>
    <experiments>5</experiments>
</comment>
<comment type="subcellular location">
    <subcellularLocation>
        <location evidence="3">Golgi apparatus</location>
        <location evidence="3">trans-Golgi network</location>
    </subcellularLocation>
    <subcellularLocation>
        <location evidence="4">Perikaryon</location>
    </subcellularLocation>
    <subcellularLocation>
        <location evidence="4">Cytoplasm</location>
        <location evidence="4">Perinuclear region</location>
    </subcellularLocation>
    <text evidence="3 4">Co-localizes with rab-2 to perinuclear puncta in the perikaryon. Co-localizes with the small GTPases rab-6.1 and rab-6.2 at Golgi structures (PubMed:21613545).</text>
</comment>
<comment type="tissue specificity">
    <text evidence="3 4">Ubiquitously expressed, with particularly strong expression in neuronal cells (PubMed:21613545). Specifically expressed in head and tail neurons and in the pharynx and ventral cord motor neurons (PubMed:27191843).</text>
</comment>
<comment type="disruption phenotype">
    <text evidence="3 4">Enlarged lysosomes (PubMed:21613545). Reduced brood size (PubMed:21613545). Egg-laying defect, slow, but coordinated locomotion, and reduced levels of unprocessed and processed cargo in the motor neuron axon of the dorsal nerve cord (PubMed:27191843).</text>
</comment>
<comment type="similarity">
    <text evidence="2">Belongs to the VPS52 family.</text>
</comment>
<proteinExistence type="evidence at protein level"/>
<accession>G5EFV8</accession>
<accession>G5EFV9</accession>
<dbReference type="EMBL" id="HQ237455">
    <property type="protein sequence ID" value="ADO17797.1"/>
    <property type="molecule type" value="mRNA"/>
</dbReference>
<dbReference type="EMBL" id="BX284606">
    <property type="protein sequence ID" value="CCD67346.2"/>
    <property type="molecule type" value="Genomic_DNA"/>
</dbReference>
<dbReference type="RefSeq" id="NP_509282.4">
    <property type="nucleotide sequence ID" value="NM_076881.6"/>
</dbReference>
<dbReference type="SMR" id="G5EFV8"/>
<dbReference type="BioGRID" id="45942">
    <property type="interactions" value="19"/>
</dbReference>
<dbReference type="ComplexPortal" id="CPX-365">
    <property type="entry name" value="GARP tethering complex"/>
</dbReference>
<dbReference type="FunCoup" id="G5EFV8">
    <property type="interactions" value="2826"/>
</dbReference>
<dbReference type="IntAct" id="G5EFV8">
    <property type="interactions" value="18"/>
</dbReference>
<dbReference type="STRING" id="6239.F08C6.3.1"/>
<dbReference type="PaxDb" id="6239-F08C6.3"/>
<dbReference type="PeptideAtlas" id="G5EFV8"/>
<dbReference type="EnsemblMetazoa" id="F08C6.3.1">
    <property type="protein sequence ID" value="F08C6.3.1"/>
    <property type="gene ID" value="WBGene00007059"/>
</dbReference>
<dbReference type="GeneID" id="181018"/>
<dbReference type="KEGG" id="cel:CELE_F08C6.3"/>
<dbReference type="AGR" id="WB:WBGene00007059"/>
<dbReference type="CTD" id="181018"/>
<dbReference type="WormBase" id="F08C6.3">
    <property type="protein sequence ID" value="CE47824"/>
    <property type="gene ID" value="WBGene00007059"/>
    <property type="gene designation" value="vps-52"/>
</dbReference>
<dbReference type="eggNOG" id="KOG1961">
    <property type="taxonomic scope" value="Eukaryota"/>
</dbReference>
<dbReference type="GeneTree" id="ENSGT00390000008815"/>
<dbReference type="HOGENOM" id="CLU_010797_0_0_1"/>
<dbReference type="InParanoid" id="G5EFV8"/>
<dbReference type="OMA" id="IHVVMVE"/>
<dbReference type="OrthoDB" id="19482at2759"/>
<dbReference type="PhylomeDB" id="G5EFV8"/>
<dbReference type="SignaLink" id="G5EFV8"/>
<dbReference type="PRO" id="PR:G5EFV8"/>
<dbReference type="Proteomes" id="UP000001940">
    <property type="component" value="Chromosome X"/>
</dbReference>
<dbReference type="Bgee" id="WBGene00007059">
    <property type="expression patterns" value="Expressed in pharyngeal muscle cell (C elegans) and 3 other cell types or tissues"/>
</dbReference>
<dbReference type="GO" id="GO:0005829">
    <property type="term" value="C:cytosol"/>
    <property type="evidence" value="ECO:0007669"/>
    <property type="project" value="GOC"/>
</dbReference>
<dbReference type="GO" id="GO:0000938">
    <property type="term" value="C:GARP complex"/>
    <property type="evidence" value="ECO:0000353"/>
    <property type="project" value="WormBase"/>
</dbReference>
<dbReference type="GO" id="GO:0005797">
    <property type="term" value="C:Golgi medial cisterna"/>
    <property type="evidence" value="ECO:0000314"/>
    <property type="project" value="WormBase"/>
</dbReference>
<dbReference type="GO" id="GO:0000138">
    <property type="term" value="C:Golgi trans cisterna"/>
    <property type="evidence" value="ECO:0000314"/>
    <property type="project" value="WormBase"/>
</dbReference>
<dbReference type="GO" id="GO:0043204">
    <property type="term" value="C:perikaryon"/>
    <property type="evidence" value="ECO:0000314"/>
    <property type="project" value="UniProtKB"/>
</dbReference>
<dbReference type="GO" id="GO:0048471">
    <property type="term" value="C:perinuclear region of cytoplasm"/>
    <property type="evidence" value="ECO:0000314"/>
    <property type="project" value="UniProtKB"/>
</dbReference>
<dbReference type="GO" id="GO:0031267">
    <property type="term" value="F:small GTPase binding"/>
    <property type="evidence" value="ECO:0000353"/>
    <property type="project" value="WormBase"/>
</dbReference>
<dbReference type="GO" id="GO:0019905">
    <property type="term" value="F:syntaxin binding"/>
    <property type="evidence" value="ECO:0000353"/>
    <property type="project" value="WormBase"/>
</dbReference>
<dbReference type="GO" id="GO:0032456">
    <property type="term" value="P:endocytic recycling"/>
    <property type="evidence" value="ECO:0000318"/>
    <property type="project" value="GO_Central"/>
</dbReference>
<dbReference type="GO" id="GO:0006896">
    <property type="term" value="P:Golgi to vacuole transport"/>
    <property type="evidence" value="ECO:0000318"/>
    <property type="project" value="GO_Central"/>
</dbReference>
<dbReference type="GO" id="GO:0007041">
    <property type="term" value="P:lysosomal transport"/>
    <property type="evidence" value="ECO:0000318"/>
    <property type="project" value="GO_Central"/>
</dbReference>
<dbReference type="GO" id="GO:1904810">
    <property type="term" value="P:negative regulation of dense core granule transport"/>
    <property type="evidence" value="ECO:0000315"/>
    <property type="project" value="UniProtKB"/>
</dbReference>
<dbReference type="GO" id="GO:1904811">
    <property type="term" value="P:positive regulation of dense core granule transport"/>
    <property type="evidence" value="ECO:0000315"/>
    <property type="project" value="UniProtKB"/>
</dbReference>
<dbReference type="GO" id="GO:0090326">
    <property type="term" value="P:positive regulation of locomotion involved in locomotory behavior"/>
    <property type="evidence" value="ECO:0000315"/>
    <property type="project" value="UniProtKB"/>
</dbReference>
<dbReference type="GO" id="GO:0015031">
    <property type="term" value="P:protein transport"/>
    <property type="evidence" value="ECO:0007669"/>
    <property type="project" value="UniProtKB-KW"/>
</dbReference>
<dbReference type="GO" id="GO:0042147">
    <property type="term" value="P:retrograde transport, endosome to Golgi"/>
    <property type="evidence" value="ECO:0000318"/>
    <property type="project" value="GO_Central"/>
</dbReference>
<dbReference type="InterPro" id="IPR007258">
    <property type="entry name" value="Vps52"/>
</dbReference>
<dbReference type="InterPro" id="IPR048361">
    <property type="entry name" value="Vps52_C"/>
</dbReference>
<dbReference type="InterPro" id="IPR048319">
    <property type="entry name" value="Vps52_CC"/>
</dbReference>
<dbReference type="PANTHER" id="PTHR14190">
    <property type="entry name" value="SUPPRESSOR OF ACTIN MUTATIONS 2/VACUOLAR PROTEIN SORTING 52"/>
    <property type="match status" value="1"/>
</dbReference>
<dbReference type="PANTHER" id="PTHR14190:SF7">
    <property type="entry name" value="VACUOLAR PROTEIN SORTING-ASSOCIATED PROTEIN 52 HOMOLOG"/>
    <property type="match status" value="1"/>
</dbReference>
<dbReference type="Pfam" id="PF20655">
    <property type="entry name" value="Vps52_C"/>
    <property type="match status" value="1"/>
</dbReference>
<dbReference type="Pfam" id="PF04129">
    <property type="entry name" value="Vps52_CC"/>
    <property type="match status" value="1"/>
</dbReference>
<reference evidence="6 7" key="1">
    <citation type="journal article" date="2011" name="Mol. Biol. Cell">
        <title>The Caenorhabditis elegans GARP complex contains the conserved Vps51 subunit and is required to maintain lysosomal morphology.</title>
        <authorList>
            <person name="Luo L."/>
            <person name="Hannemann M."/>
            <person name="Koenig S."/>
            <person name="Hegermann J."/>
            <person name="Ailion M."/>
            <person name="Cho M.K."/>
            <person name="Sasidharan N."/>
            <person name="Zweckstetter M."/>
            <person name="Rensing S.A."/>
            <person name="Eimer S."/>
        </authorList>
    </citation>
    <scope>NUCLEOTIDE SEQUENCE [MRNA]</scope>
    <scope>FUNCTION</scope>
    <scope>IDENTIFICATION IN THE GARP COMPLEX</scope>
    <scope>INTERACTION WITH VPS-53; VPS-54; RAB-6.1 AND RAB-6.2</scope>
    <scope>SUBCELLULAR LOCATION</scope>
    <scope>TISSUE SPECIFICITY</scope>
    <scope>DISRUPTION PHENOTYPE</scope>
</reference>
<reference key="2">
    <citation type="journal article" date="1998" name="Science">
        <title>Genome sequence of the nematode C. elegans: a platform for investigating biology.</title>
        <authorList>
            <consortium name="The C. elegans sequencing consortium"/>
        </authorList>
    </citation>
    <scope>NUCLEOTIDE SEQUENCE [LARGE SCALE GENOMIC DNA]</scope>
    <source>
        <strain>Bristol N2</strain>
    </source>
</reference>
<reference key="3">
    <citation type="journal article" date="2016" name="PLoS Genet.">
        <title>The EARP complex and its interactor eipr-1 are required for cargo sorting to dense-core vesicles.</title>
        <authorList>
            <person name="Topalidou I."/>
            <person name="Cattin-Ortola J."/>
            <person name="Pappas A.L."/>
            <person name="Cooper K."/>
            <person name="Merrihew G.E."/>
            <person name="MacCoss M.J."/>
            <person name="Ailion M."/>
        </authorList>
    </citation>
    <scope>FUNCTION</scope>
    <scope>SUBCELLULAR LOCATION</scope>
    <scope>TISSUE SPECIFICITY</scope>
    <scope>DISRUPTION PHENOTYPE</scope>
</reference>
<feature type="chain" id="PRO_0000421176" description="Vacuolar protein sorting-associated protein 52 homolog">
    <location>
        <begin position="1"/>
        <end position="702"/>
    </location>
</feature>
<feature type="coiled-coil region" evidence="2">
    <location>
        <begin position="505"/>
        <end position="535"/>
    </location>
</feature>
<feature type="sequence conflict" description="In Ref. 1; ADO17797." evidence="6" ref="1">
    <original>A</original>
    <variation>V</variation>
    <location>
        <position position="342"/>
    </location>
</feature>
<protein>
    <recommendedName>
        <fullName evidence="1 5">Vacuolar protein sorting-associated protein 52 homolog</fullName>
    </recommendedName>
</protein>
<keyword id="KW-0175">Coiled coil</keyword>
<keyword id="KW-0963">Cytoplasm</keyword>
<keyword id="KW-0333">Golgi apparatus</keyword>
<keyword id="KW-0653">Protein transport</keyword>
<keyword id="KW-1185">Reference proteome</keyword>
<keyword id="KW-0813">Transport</keyword>
<sequence length="702" mass="80708">MPRTRVNLQKSEANDRSFTISSLEFCLSQLRKADPNLVKKAIASGDGLTESKNDVSTRLSEAHRYSVQQCLDNSEQLAQLHNQLVHCDNVFERLQATLYSFQDNLGSIGQDMKNLQLQSHHIHQELENRQKVRVELSQFVDDIAVSQTMMKTINDTDANDRGFLEALHELHHKITLILQRGNGDAVAVNDTMPILEGLKLKAVVKVREWLLQKMFQFRKPLSNYQVFQHQLLKCRFFYEFLLHHDLISAKELQDEYIDTISKMFFTYFKAYATRLFKLAMKDVATKEDALGSIDFAKPAGLGAIFSSKQHVVRNKATVFSIGQRHQILSDDFLGALIVPHAATQNHQSYQFEALFRSIQLAFVDHYSHEYLFITDFFLVSNDEAIELHNKAMARAMSVVLKSCEEQIALSWDAISLHLCICLCDKFTEVLAEREVPEVSDYWNTVTSFLWTRLNLVMSQHYESVKSVDLKKLMHSGSLDARPHFIVRRYAELTSAHLMIAKASGKEMGAKMEAVLENSEDSIEQLLTRMSAMQQTQKNKHVFLINNYDLILSIIDNEESKHTKIYAIVHELEQKSIDDFVEEMLEPHIGYMIKFVNECESLIVQGHTQLLVRYNDKVGTVVANFNAKWRPAVDSINSECIQLFTNFSLGTTILQTIFTKYVQYINRFTKILSHDVFAKNPVCSQLVNVHQVMLEIKRFKPAY</sequence>
<gene>
    <name evidence="8" type="primary">vps-52</name>
    <name evidence="8" type="synonym">tag-197</name>
    <name type="ORF">F08C6.3</name>
</gene>
<evidence type="ECO:0000250" key="1">
    <source>
        <dbReference type="UniProtKB" id="O01839"/>
    </source>
</evidence>
<evidence type="ECO:0000255" key="2"/>
<evidence type="ECO:0000269" key="3">
    <source>
    </source>
</evidence>
<evidence type="ECO:0000269" key="4">
    <source>
    </source>
</evidence>
<evidence type="ECO:0000303" key="5">
    <source>
    </source>
</evidence>
<evidence type="ECO:0000305" key="6"/>
<evidence type="ECO:0000312" key="7">
    <source>
        <dbReference type="EMBL" id="ADO17797.1"/>
    </source>
</evidence>
<evidence type="ECO:0000312" key="8">
    <source>
        <dbReference type="WormBase" id="F08C6.3"/>
    </source>
</evidence>
<name>VPS52_CAEEL</name>